<feature type="chain" id="PRO_0000375366" description="YcgL domain-containing protein Sbal195_1903">
    <location>
        <begin position="1"/>
        <end position="92"/>
    </location>
</feature>
<feature type="domain" description="YcgL" evidence="1">
    <location>
        <begin position="1"/>
        <end position="85"/>
    </location>
</feature>
<gene>
    <name type="ordered locus">Sbal195_1903</name>
</gene>
<name>Y1903_SHEB9</name>
<sequence length="92" mass="10374">MLCAVYKSSRKADTYLFVKKRDCFDDVPAPLMEMFGVPKLVMVFPIAKRDALGMADIQKVRAAMEENGFYLQIPPPQVNLLAEHKLSLGIKD</sequence>
<proteinExistence type="inferred from homology"/>
<protein>
    <recommendedName>
        <fullName evidence="1">YcgL domain-containing protein Sbal195_1903</fullName>
    </recommendedName>
</protein>
<organism>
    <name type="scientific">Shewanella baltica (strain OS195)</name>
    <dbReference type="NCBI Taxonomy" id="399599"/>
    <lineage>
        <taxon>Bacteria</taxon>
        <taxon>Pseudomonadati</taxon>
        <taxon>Pseudomonadota</taxon>
        <taxon>Gammaproteobacteria</taxon>
        <taxon>Alteromonadales</taxon>
        <taxon>Shewanellaceae</taxon>
        <taxon>Shewanella</taxon>
    </lineage>
</organism>
<accession>A9KYY6</accession>
<dbReference type="EMBL" id="CP000891">
    <property type="protein sequence ID" value="ABX49074.1"/>
    <property type="status" value="ALT_INIT"/>
    <property type="molecule type" value="Genomic_DNA"/>
</dbReference>
<dbReference type="RefSeq" id="WP_006081364.1">
    <property type="nucleotide sequence ID" value="NC_009997.1"/>
</dbReference>
<dbReference type="SMR" id="A9KYY6"/>
<dbReference type="KEGG" id="sbn:Sbal195_1903"/>
<dbReference type="HOGENOM" id="CLU_155118_1_0_6"/>
<dbReference type="Proteomes" id="UP000000770">
    <property type="component" value="Chromosome"/>
</dbReference>
<dbReference type="Gene3D" id="3.10.510.20">
    <property type="entry name" value="YcgL domain"/>
    <property type="match status" value="1"/>
</dbReference>
<dbReference type="HAMAP" id="MF_01866">
    <property type="entry name" value="UPF0745"/>
    <property type="match status" value="1"/>
</dbReference>
<dbReference type="InterPro" id="IPR038068">
    <property type="entry name" value="YcgL-like_sf"/>
</dbReference>
<dbReference type="InterPro" id="IPR027354">
    <property type="entry name" value="YcgL_dom"/>
</dbReference>
<dbReference type="PANTHER" id="PTHR38109">
    <property type="entry name" value="PROTEIN YCGL"/>
    <property type="match status" value="1"/>
</dbReference>
<dbReference type="PANTHER" id="PTHR38109:SF1">
    <property type="entry name" value="PROTEIN YCGL"/>
    <property type="match status" value="1"/>
</dbReference>
<dbReference type="Pfam" id="PF05166">
    <property type="entry name" value="YcgL"/>
    <property type="match status" value="1"/>
</dbReference>
<dbReference type="SUPFAM" id="SSF160191">
    <property type="entry name" value="YcgL-like"/>
    <property type="match status" value="1"/>
</dbReference>
<dbReference type="PROSITE" id="PS51648">
    <property type="entry name" value="YCGL"/>
    <property type="match status" value="1"/>
</dbReference>
<evidence type="ECO:0000255" key="1">
    <source>
        <dbReference type="HAMAP-Rule" id="MF_01866"/>
    </source>
</evidence>
<evidence type="ECO:0000305" key="2"/>
<comment type="sequence caution" evidence="2">
    <conflict type="erroneous initiation">
        <sequence resource="EMBL-CDS" id="ABX49074"/>
    </conflict>
</comment>
<reference key="1">
    <citation type="submission" date="2007-11" db="EMBL/GenBank/DDBJ databases">
        <title>Complete sequence of chromosome of Shewanella baltica OS195.</title>
        <authorList>
            <consortium name="US DOE Joint Genome Institute"/>
            <person name="Copeland A."/>
            <person name="Lucas S."/>
            <person name="Lapidus A."/>
            <person name="Barry K."/>
            <person name="Glavina del Rio T."/>
            <person name="Dalin E."/>
            <person name="Tice H."/>
            <person name="Pitluck S."/>
            <person name="Chain P."/>
            <person name="Malfatti S."/>
            <person name="Shin M."/>
            <person name="Vergez L."/>
            <person name="Schmutz J."/>
            <person name="Larimer F."/>
            <person name="Land M."/>
            <person name="Hauser L."/>
            <person name="Kyrpides N."/>
            <person name="Kim E."/>
            <person name="Brettar I."/>
            <person name="Rodrigues J."/>
            <person name="Konstantinidis K."/>
            <person name="Klappenbach J."/>
            <person name="Hofle M."/>
            <person name="Tiedje J."/>
            <person name="Richardson P."/>
        </authorList>
    </citation>
    <scope>NUCLEOTIDE SEQUENCE [LARGE SCALE GENOMIC DNA]</scope>
    <source>
        <strain>OS195</strain>
    </source>
</reference>